<feature type="chain" id="PRO_0000175476" description="DNA-directed RNA polymerase subunit alpha">
    <location>
        <begin position="1"/>
        <end position="337"/>
    </location>
</feature>
<feature type="region of interest" description="Alpha N-terminal domain (alpha-NTD)" evidence="1">
    <location>
        <begin position="1"/>
        <end position="233"/>
    </location>
</feature>
<feature type="region of interest" description="Alpha C-terminal domain (alpha-CTD)" evidence="1">
    <location>
        <begin position="267"/>
        <end position="337"/>
    </location>
</feature>
<dbReference type="EC" id="2.7.7.6" evidence="1"/>
<dbReference type="EMBL" id="AP006728">
    <property type="protein sequence ID" value="BAD26810.1"/>
    <property type="molecule type" value="Genomic_DNA"/>
</dbReference>
<dbReference type="RefSeq" id="YP_052781.1">
    <property type="nucleotide sequence ID" value="NC_005973.1"/>
</dbReference>
<dbReference type="SMR" id="Q6ENE2"/>
<dbReference type="STRING" id="4536.Q6ENE2"/>
<dbReference type="GeneID" id="2885961"/>
<dbReference type="eggNOG" id="ENOG502QRS7">
    <property type="taxonomic scope" value="Eukaryota"/>
</dbReference>
<dbReference type="Proteomes" id="UP000006591">
    <property type="component" value="Chloroplast"/>
</dbReference>
<dbReference type="GO" id="GO:0009507">
    <property type="term" value="C:chloroplast"/>
    <property type="evidence" value="ECO:0007669"/>
    <property type="project" value="UniProtKB-SubCell"/>
</dbReference>
<dbReference type="GO" id="GO:0000428">
    <property type="term" value="C:DNA-directed RNA polymerase complex"/>
    <property type="evidence" value="ECO:0007669"/>
    <property type="project" value="UniProtKB-KW"/>
</dbReference>
<dbReference type="GO" id="GO:0005739">
    <property type="term" value="C:mitochondrion"/>
    <property type="evidence" value="ECO:0007669"/>
    <property type="project" value="GOC"/>
</dbReference>
<dbReference type="GO" id="GO:0009536">
    <property type="term" value="C:plastid"/>
    <property type="evidence" value="ECO:0000305"/>
    <property type="project" value="Gramene"/>
</dbReference>
<dbReference type="GO" id="GO:0003677">
    <property type="term" value="F:DNA binding"/>
    <property type="evidence" value="ECO:0007669"/>
    <property type="project" value="UniProtKB-UniRule"/>
</dbReference>
<dbReference type="GO" id="GO:0003899">
    <property type="term" value="F:DNA-directed RNA polymerase activity"/>
    <property type="evidence" value="ECO:0007669"/>
    <property type="project" value="UniProtKB-UniRule"/>
</dbReference>
<dbReference type="GO" id="GO:0046983">
    <property type="term" value="F:protein dimerization activity"/>
    <property type="evidence" value="ECO:0007669"/>
    <property type="project" value="InterPro"/>
</dbReference>
<dbReference type="GO" id="GO:0006351">
    <property type="term" value="P:DNA-templated transcription"/>
    <property type="evidence" value="ECO:0007669"/>
    <property type="project" value="UniProtKB-UniRule"/>
</dbReference>
<dbReference type="CDD" id="cd06928">
    <property type="entry name" value="RNAP_alpha_NTD"/>
    <property type="match status" value="1"/>
</dbReference>
<dbReference type="FunFam" id="1.10.150.20:FF:000021">
    <property type="entry name" value="DNA-directed RNA polymerase subunit alpha"/>
    <property type="match status" value="1"/>
</dbReference>
<dbReference type="FunFam" id="2.170.120.12:FF:000001">
    <property type="entry name" value="DNA-directed RNA polymerase subunit alpha"/>
    <property type="match status" value="1"/>
</dbReference>
<dbReference type="Gene3D" id="1.10.150.20">
    <property type="entry name" value="5' to 3' exonuclease, C-terminal subdomain"/>
    <property type="match status" value="1"/>
</dbReference>
<dbReference type="Gene3D" id="2.170.120.12">
    <property type="entry name" value="DNA-directed RNA polymerase, insert domain"/>
    <property type="match status" value="1"/>
</dbReference>
<dbReference type="Gene3D" id="3.30.1360.10">
    <property type="entry name" value="RNA polymerase, RBP11-like subunit"/>
    <property type="match status" value="1"/>
</dbReference>
<dbReference type="HAMAP" id="MF_00059">
    <property type="entry name" value="RNApol_bact_RpoA"/>
    <property type="match status" value="1"/>
</dbReference>
<dbReference type="InterPro" id="IPR011262">
    <property type="entry name" value="DNA-dir_RNA_pol_insert"/>
</dbReference>
<dbReference type="InterPro" id="IPR011263">
    <property type="entry name" value="DNA-dir_RNA_pol_RpoA/D/Rpb3"/>
</dbReference>
<dbReference type="InterPro" id="IPR011773">
    <property type="entry name" value="DNA-dir_RpoA"/>
</dbReference>
<dbReference type="InterPro" id="IPR036603">
    <property type="entry name" value="RBP11-like"/>
</dbReference>
<dbReference type="InterPro" id="IPR011260">
    <property type="entry name" value="RNAP_asu_C"/>
</dbReference>
<dbReference type="InterPro" id="IPR036643">
    <property type="entry name" value="RNApol_insert_sf"/>
</dbReference>
<dbReference type="NCBIfam" id="TIGR02027">
    <property type="entry name" value="rpoA"/>
    <property type="match status" value="1"/>
</dbReference>
<dbReference type="Pfam" id="PF01000">
    <property type="entry name" value="RNA_pol_A_bac"/>
    <property type="match status" value="1"/>
</dbReference>
<dbReference type="Pfam" id="PF03118">
    <property type="entry name" value="RNA_pol_A_CTD"/>
    <property type="match status" value="1"/>
</dbReference>
<dbReference type="Pfam" id="PF01193">
    <property type="entry name" value="RNA_pol_L"/>
    <property type="match status" value="1"/>
</dbReference>
<dbReference type="SMART" id="SM00662">
    <property type="entry name" value="RPOLD"/>
    <property type="match status" value="1"/>
</dbReference>
<dbReference type="SUPFAM" id="SSF47789">
    <property type="entry name" value="C-terminal domain of RNA polymerase alpha subunit"/>
    <property type="match status" value="1"/>
</dbReference>
<dbReference type="SUPFAM" id="SSF56553">
    <property type="entry name" value="Insert subdomain of RNA polymerase alpha subunit"/>
    <property type="match status" value="1"/>
</dbReference>
<dbReference type="SUPFAM" id="SSF55257">
    <property type="entry name" value="RBP11-like subunits of RNA polymerase"/>
    <property type="match status" value="1"/>
</dbReference>
<geneLocation type="chloroplast"/>
<evidence type="ECO:0000255" key="1">
    <source>
        <dbReference type="HAMAP-Rule" id="MF_00059"/>
    </source>
</evidence>
<evidence type="ECO:0000312" key="2">
    <source>
        <dbReference type="Proteomes" id="UP000006591"/>
    </source>
</evidence>
<organism>
    <name type="scientific">Oryza nivara</name>
    <name type="common">Indian wild rice</name>
    <name type="synonym">Oryza sativa f. spontanea</name>
    <dbReference type="NCBI Taxonomy" id="4536"/>
    <lineage>
        <taxon>Eukaryota</taxon>
        <taxon>Viridiplantae</taxon>
        <taxon>Streptophyta</taxon>
        <taxon>Embryophyta</taxon>
        <taxon>Tracheophyta</taxon>
        <taxon>Spermatophyta</taxon>
        <taxon>Magnoliopsida</taxon>
        <taxon>Liliopsida</taxon>
        <taxon>Poales</taxon>
        <taxon>Poaceae</taxon>
        <taxon>BOP clade</taxon>
        <taxon>Oryzoideae</taxon>
        <taxon>Oryzeae</taxon>
        <taxon>Oryzinae</taxon>
        <taxon>Oryza</taxon>
    </lineage>
</organism>
<keyword id="KW-0150">Chloroplast</keyword>
<keyword id="KW-0240">DNA-directed RNA polymerase</keyword>
<keyword id="KW-0548">Nucleotidyltransferase</keyword>
<keyword id="KW-0934">Plastid</keyword>
<keyword id="KW-1185">Reference proteome</keyword>
<keyword id="KW-0804">Transcription</keyword>
<keyword id="KW-0808">Transferase</keyword>
<proteinExistence type="inferred from homology"/>
<gene>
    <name evidence="1" type="primary">rpoA</name>
</gene>
<reference key="1">
    <citation type="journal article" date="2004" name="Gene">
        <title>The complete nucleotide sequence of wild rice (Oryza nivara) chloroplast genome: first genome wide comparative sequence analysis of wild and cultivated rice.</title>
        <authorList>
            <person name="Masood M.S."/>
            <person name="Nishikawa T."/>
            <person name="Fukuoka S."/>
            <person name="Njenga P.K."/>
            <person name="Tsudzuki T."/>
            <person name="Kadowaki K."/>
        </authorList>
    </citation>
    <scope>NUCLEOTIDE SEQUENCE [LARGE SCALE GENOMIC DNA]</scope>
    <source>
        <strain evidence="2">cv. SL10</strain>
    </source>
</reference>
<comment type="function">
    <text evidence="1">DNA-dependent RNA polymerase catalyzes the transcription of DNA into RNA using the four ribonucleoside triphosphates as substrates.</text>
</comment>
<comment type="catalytic activity">
    <reaction evidence="1">
        <text>RNA(n) + a ribonucleoside 5'-triphosphate = RNA(n+1) + diphosphate</text>
        <dbReference type="Rhea" id="RHEA:21248"/>
        <dbReference type="Rhea" id="RHEA-COMP:14527"/>
        <dbReference type="Rhea" id="RHEA-COMP:17342"/>
        <dbReference type="ChEBI" id="CHEBI:33019"/>
        <dbReference type="ChEBI" id="CHEBI:61557"/>
        <dbReference type="ChEBI" id="CHEBI:140395"/>
        <dbReference type="EC" id="2.7.7.6"/>
    </reaction>
</comment>
<comment type="subunit">
    <text evidence="1">In plastids the minimal PEP RNA polymerase catalytic core is composed of four subunits: alpha, beta, beta', and beta''. When a (nuclear-encoded) sigma factor is associated with the core the holoenzyme is formed, which can initiate transcription.</text>
</comment>
<comment type="subcellular location">
    <subcellularLocation>
        <location>Plastid</location>
        <location>Chloroplast</location>
    </subcellularLocation>
</comment>
<comment type="domain">
    <text evidence="1">The N-terminal domain is essential for RNAP assembly and basal transcription, whereas the C-terminal domain is involved in interaction with transcriptional regulators and with upstream promoter elements.</text>
</comment>
<comment type="similarity">
    <text evidence="1">Belongs to the RNA polymerase alpha chain family.</text>
</comment>
<protein>
    <recommendedName>
        <fullName evidence="1">DNA-directed RNA polymerase subunit alpha</fullName>
        <shortName evidence="1">PEP</shortName>
        <ecNumber evidence="1">2.7.7.6</ecNumber>
    </recommendedName>
    <alternativeName>
        <fullName evidence="1">Plastid-encoded RNA polymerase subunit alpha</fullName>
        <shortName evidence="1">RNA polymerase subunit alpha</shortName>
    </alternativeName>
</protein>
<name>RPOA_ORYNI</name>
<sequence>MVREEVAGSTQTLQWKCVESRVDSKRLYYGRFILSPLRKGQADTVGIALRRALLGETEGTCITHAKFGSVPHEYSTIAGIEESVQEILLNLKEIVLRSNLYGVRTASICVKGPRYITAQDIILPPSVEIVDTAQPIANLTEPTDFRIELRIKRDRGYHTEVRKNTQDGSYPIDAVSMPVRNVNYSIFACGNGNAKYEILFLEIWTNGSLTPKEALYEASRNLIDLFLPFLHTEEEGTRFQENKNRFTSPLLSFQKRLTNLKKNKKRIPLNCIFIDQLELPSRTYNCLKRANIHTLLDLLSKTEEDLMRIDSFRMQDGKQIWDTLEKHLPMDLPKNKF</sequence>
<accession>Q6ENE2</accession>